<organism>
    <name type="scientific">Leptospira interrogans serogroup Icterohaemorrhagiae serovar Lai (strain 56601)</name>
    <dbReference type="NCBI Taxonomy" id="189518"/>
    <lineage>
        <taxon>Bacteria</taxon>
        <taxon>Pseudomonadati</taxon>
        <taxon>Spirochaetota</taxon>
        <taxon>Spirochaetia</taxon>
        <taxon>Leptospirales</taxon>
        <taxon>Leptospiraceae</taxon>
        <taxon>Leptospira</taxon>
    </lineage>
</organism>
<sequence length="127" mass="14173">MNFSKSLLLIAFGGTIGSIFRYLLQYWFGNVLGYSLPWGTLTANLLGSFLIGVVYAISDRFPLFDPQWKFLLASGFCGGFTTFSTFSYETFQMLKSGHYILFLGYICLSVVGGIGFAFAGVWMIKNF</sequence>
<accession>Q8EZS4</accession>
<evidence type="ECO:0000255" key="1">
    <source>
        <dbReference type="HAMAP-Rule" id="MF_00454"/>
    </source>
</evidence>
<evidence type="ECO:0000305" key="2"/>
<gene>
    <name evidence="1" type="primary">fluC</name>
    <name evidence="1" type="synonym">crcB</name>
    <name type="ordered locus">LA_3777</name>
</gene>
<comment type="function">
    <text evidence="1">Fluoride-specific ion channel. Important for reducing fluoride concentration in the cell, thus reducing its toxicity.</text>
</comment>
<comment type="catalytic activity">
    <reaction evidence="1">
        <text>fluoride(in) = fluoride(out)</text>
        <dbReference type="Rhea" id="RHEA:76159"/>
        <dbReference type="ChEBI" id="CHEBI:17051"/>
    </reaction>
    <physiologicalReaction direction="left-to-right" evidence="1">
        <dbReference type="Rhea" id="RHEA:76160"/>
    </physiologicalReaction>
</comment>
<comment type="activity regulation">
    <text evidence="1">Na(+) is not transported, but it plays an essential structural role and its presence is essential for fluoride channel function.</text>
</comment>
<comment type="subcellular location">
    <subcellularLocation>
        <location evidence="1">Cell inner membrane</location>
        <topology evidence="1">Multi-pass membrane protein</topology>
    </subcellularLocation>
</comment>
<comment type="similarity">
    <text evidence="1">Belongs to the fluoride channel Fluc/FEX (TC 1.A.43) family.</text>
</comment>
<comment type="sequence caution" evidence="2">
    <conflict type="erroneous initiation">
        <sequence resource="EMBL-CDS" id="AAN50975"/>
    </conflict>
    <text>Truncated N-terminus.</text>
</comment>
<protein>
    <recommendedName>
        <fullName evidence="1">Fluoride-specific ion channel FluC</fullName>
    </recommendedName>
</protein>
<dbReference type="EMBL" id="AE010300">
    <property type="protein sequence ID" value="AAN50975.2"/>
    <property type="status" value="ALT_INIT"/>
    <property type="molecule type" value="Genomic_DNA"/>
</dbReference>
<dbReference type="RefSeq" id="NP_713957.2">
    <property type="nucleotide sequence ID" value="NC_004342.2"/>
</dbReference>
<dbReference type="RefSeq" id="WP_001011704.1">
    <property type="nucleotide sequence ID" value="NC_004342.2"/>
</dbReference>
<dbReference type="SMR" id="Q8EZS4"/>
<dbReference type="FunCoup" id="Q8EZS4">
    <property type="interactions" value="231"/>
</dbReference>
<dbReference type="PaxDb" id="189518-LA_3777"/>
<dbReference type="EnsemblBacteria" id="AAN50975">
    <property type="protein sequence ID" value="AAN50975"/>
    <property type="gene ID" value="LA_3777"/>
</dbReference>
<dbReference type="KEGG" id="lil:LA_3777"/>
<dbReference type="PATRIC" id="fig|189518.3.peg.3748"/>
<dbReference type="HOGENOM" id="CLU_114342_3_2_12"/>
<dbReference type="InParanoid" id="Q8EZS4"/>
<dbReference type="OrthoDB" id="9815830at2"/>
<dbReference type="Proteomes" id="UP000001408">
    <property type="component" value="Chromosome I"/>
</dbReference>
<dbReference type="GO" id="GO:0005886">
    <property type="term" value="C:plasma membrane"/>
    <property type="evidence" value="ECO:0000318"/>
    <property type="project" value="GO_Central"/>
</dbReference>
<dbReference type="GO" id="GO:0062054">
    <property type="term" value="F:fluoride channel activity"/>
    <property type="evidence" value="ECO:0007669"/>
    <property type="project" value="UniProtKB-UniRule"/>
</dbReference>
<dbReference type="GO" id="GO:1903425">
    <property type="term" value="F:fluoride transmembrane transporter activity"/>
    <property type="evidence" value="ECO:0000318"/>
    <property type="project" value="GO_Central"/>
</dbReference>
<dbReference type="GO" id="GO:0046872">
    <property type="term" value="F:metal ion binding"/>
    <property type="evidence" value="ECO:0007669"/>
    <property type="project" value="UniProtKB-KW"/>
</dbReference>
<dbReference type="GO" id="GO:0140114">
    <property type="term" value="P:cellular detoxification of fluoride"/>
    <property type="evidence" value="ECO:0007669"/>
    <property type="project" value="UniProtKB-UniRule"/>
</dbReference>
<dbReference type="GO" id="GO:1903424">
    <property type="term" value="P:fluoride transmembrane transport"/>
    <property type="evidence" value="ECO:0000318"/>
    <property type="project" value="GO_Central"/>
</dbReference>
<dbReference type="HAMAP" id="MF_00454">
    <property type="entry name" value="FluC"/>
    <property type="match status" value="1"/>
</dbReference>
<dbReference type="InterPro" id="IPR003691">
    <property type="entry name" value="FluC"/>
</dbReference>
<dbReference type="NCBIfam" id="TIGR00494">
    <property type="entry name" value="crcB"/>
    <property type="match status" value="1"/>
</dbReference>
<dbReference type="PANTHER" id="PTHR28259">
    <property type="entry name" value="FLUORIDE EXPORT PROTEIN 1-RELATED"/>
    <property type="match status" value="1"/>
</dbReference>
<dbReference type="PANTHER" id="PTHR28259:SF1">
    <property type="entry name" value="FLUORIDE EXPORT PROTEIN 1-RELATED"/>
    <property type="match status" value="1"/>
</dbReference>
<dbReference type="Pfam" id="PF02537">
    <property type="entry name" value="CRCB"/>
    <property type="match status" value="1"/>
</dbReference>
<keyword id="KW-0997">Cell inner membrane</keyword>
<keyword id="KW-1003">Cell membrane</keyword>
<keyword id="KW-0407">Ion channel</keyword>
<keyword id="KW-0406">Ion transport</keyword>
<keyword id="KW-0472">Membrane</keyword>
<keyword id="KW-0479">Metal-binding</keyword>
<keyword id="KW-1185">Reference proteome</keyword>
<keyword id="KW-0915">Sodium</keyword>
<keyword id="KW-0812">Transmembrane</keyword>
<keyword id="KW-1133">Transmembrane helix</keyword>
<keyword id="KW-0813">Transport</keyword>
<name>FLUC_LEPIN</name>
<proteinExistence type="inferred from homology"/>
<reference key="1">
    <citation type="journal article" date="2003" name="Nature">
        <title>Unique physiological and pathogenic features of Leptospira interrogans revealed by whole-genome sequencing.</title>
        <authorList>
            <person name="Ren S.-X."/>
            <person name="Fu G."/>
            <person name="Jiang X.-G."/>
            <person name="Zeng R."/>
            <person name="Miao Y.-G."/>
            <person name="Xu H."/>
            <person name="Zhang Y.-X."/>
            <person name="Xiong H."/>
            <person name="Lu G."/>
            <person name="Lu L.-F."/>
            <person name="Jiang H.-Q."/>
            <person name="Jia J."/>
            <person name="Tu Y.-F."/>
            <person name="Jiang J.-X."/>
            <person name="Gu W.-Y."/>
            <person name="Zhang Y.-Q."/>
            <person name="Cai Z."/>
            <person name="Sheng H.-H."/>
            <person name="Yin H.-F."/>
            <person name="Zhang Y."/>
            <person name="Zhu G.-F."/>
            <person name="Wan M."/>
            <person name="Huang H.-L."/>
            <person name="Qian Z."/>
            <person name="Wang S.-Y."/>
            <person name="Ma W."/>
            <person name="Yao Z.-J."/>
            <person name="Shen Y."/>
            <person name="Qiang B.-Q."/>
            <person name="Xia Q.-C."/>
            <person name="Guo X.-K."/>
            <person name="Danchin A."/>
            <person name="Saint Girons I."/>
            <person name="Somerville R.L."/>
            <person name="Wen Y.-M."/>
            <person name="Shi M.-H."/>
            <person name="Chen Z."/>
            <person name="Xu J.-G."/>
            <person name="Zhao G.-P."/>
        </authorList>
    </citation>
    <scope>NUCLEOTIDE SEQUENCE [LARGE SCALE GENOMIC DNA]</scope>
    <source>
        <strain>56601</strain>
    </source>
</reference>
<feature type="chain" id="PRO_0000110124" description="Fluoride-specific ion channel FluC">
    <location>
        <begin position="1"/>
        <end position="127"/>
    </location>
</feature>
<feature type="transmembrane region" description="Helical" evidence="1">
    <location>
        <begin position="8"/>
        <end position="28"/>
    </location>
</feature>
<feature type="transmembrane region" description="Helical" evidence="1">
    <location>
        <begin position="37"/>
        <end position="57"/>
    </location>
</feature>
<feature type="transmembrane region" description="Helical" evidence="1">
    <location>
        <begin position="68"/>
        <end position="88"/>
    </location>
</feature>
<feature type="transmembrane region" description="Helical" evidence="1">
    <location>
        <begin position="100"/>
        <end position="120"/>
    </location>
</feature>
<feature type="binding site" evidence="1">
    <location>
        <position position="78"/>
    </location>
    <ligand>
        <name>Na(+)</name>
        <dbReference type="ChEBI" id="CHEBI:29101"/>
        <note>structural</note>
    </ligand>
</feature>
<feature type="binding site" evidence="1">
    <location>
        <position position="81"/>
    </location>
    <ligand>
        <name>Na(+)</name>
        <dbReference type="ChEBI" id="CHEBI:29101"/>
        <note>structural</note>
    </ligand>
</feature>